<keyword id="KW-0002">3D-structure</keyword>
<keyword id="KW-0150">Chloroplast</keyword>
<keyword id="KW-0318">Glutathionylation</keyword>
<keyword id="KW-0496">Mitochondrion</keyword>
<keyword id="KW-0934">Plastid</keyword>
<keyword id="KW-1185">Reference proteome</keyword>
<keyword id="KW-0809">Transit peptide</keyword>
<proteinExistence type="evidence at protein level"/>
<sequence>MAAAMSSSCCASSLRLIPFKRTLFSSIHYPAKTLLLRPLKPSEVPSFRRTIITFQKISTGIVPPPSASSSPSSYGDLQPIEELPPKLQEIVKLFQSVQEPKAKYEQLMFYGKNLTPLDSQFKTRENKVEGCVSQVWVRAFFDEERNVVYEADSDSVLTKGLAALLVKGLSGRPVPEILRITPDFAVLLGLQQSLSPSRNNGLLNMLKLMQKKALHLEVKGEEDSSSGESSESSFVSIPETKDEANVPEVDLESKPDLVEDLGTEKIDDSESGSNVVALGSRGMRIREKLEKELDPVELEVEDVSYQHAGHAAVRGSAGDDGETHFNLRIVSDAFQGKSLVKRHRLIYDLLQDELKSGLHALSIVAKTPAEV</sequence>
<accession>Q84W65</accession>
<accession>O65584</accession>
<reference key="1">
    <citation type="journal article" date="1999" name="Nature">
        <title>Sequence and analysis of chromosome 4 of the plant Arabidopsis thaliana.</title>
        <authorList>
            <person name="Mayer K.F.X."/>
            <person name="Schueller C."/>
            <person name="Wambutt R."/>
            <person name="Murphy G."/>
            <person name="Volckaert G."/>
            <person name="Pohl T."/>
            <person name="Duesterhoeft A."/>
            <person name="Stiekema W."/>
            <person name="Entian K.-D."/>
            <person name="Terryn N."/>
            <person name="Harris B."/>
            <person name="Ansorge W."/>
            <person name="Brandt P."/>
            <person name="Grivell L.A."/>
            <person name="Rieger M."/>
            <person name="Weichselgartner M."/>
            <person name="de Simone V."/>
            <person name="Obermaier B."/>
            <person name="Mache R."/>
            <person name="Mueller M."/>
            <person name="Kreis M."/>
            <person name="Delseny M."/>
            <person name="Puigdomenech P."/>
            <person name="Watson M."/>
            <person name="Schmidtheini T."/>
            <person name="Reichert B."/>
            <person name="Portetelle D."/>
            <person name="Perez-Alonso M."/>
            <person name="Boutry M."/>
            <person name="Bancroft I."/>
            <person name="Vos P."/>
            <person name="Hoheisel J."/>
            <person name="Zimmermann W."/>
            <person name="Wedler H."/>
            <person name="Ridley P."/>
            <person name="Langham S.-A."/>
            <person name="McCullagh B."/>
            <person name="Bilham L."/>
            <person name="Robben J."/>
            <person name="van der Schueren J."/>
            <person name="Grymonprez B."/>
            <person name="Chuang Y.-J."/>
            <person name="Vandenbussche F."/>
            <person name="Braeken M."/>
            <person name="Weltjens I."/>
            <person name="Voet M."/>
            <person name="Bastiaens I."/>
            <person name="Aert R."/>
            <person name="Defoor E."/>
            <person name="Weitzenegger T."/>
            <person name="Bothe G."/>
            <person name="Ramsperger U."/>
            <person name="Hilbert H."/>
            <person name="Braun M."/>
            <person name="Holzer E."/>
            <person name="Brandt A."/>
            <person name="Peters S."/>
            <person name="van Staveren M."/>
            <person name="Dirkse W."/>
            <person name="Mooijman P."/>
            <person name="Klein Lankhorst R."/>
            <person name="Rose M."/>
            <person name="Hauf J."/>
            <person name="Koetter P."/>
            <person name="Berneiser S."/>
            <person name="Hempel S."/>
            <person name="Feldpausch M."/>
            <person name="Lamberth S."/>
            <person name="Van den Daele H."/>
            <person name="De Keyser A."/>
            <person name="Buysshaert C."/>
            <person name="Gielen J."/>
            <person name="Villarroel R."/>
            <person name="De Clercq R."/>
            <person name="van Montagu M."/>
            <person name="Rogers J."/>
            <person name="Cronin A."/>
            <person name="Quail M.A."/>
            <person name="Bray-Allen S."/>
            <person name="Clark L."/>
            <person name="Doggett J."/>
            <person name="Hall S."/>
            <person name="Kay M."/>
            <person name="Lennard N."/>
            <person name="McLay K."/>
            <person name="Mayes R."/>
            <person name="Pettett A."/>
            <person name="Rajandream M.A."/>
            <person name="Lyne M."/>
            <person name="Benes V."/>
            <person name="Rechmann S."/>
            <person name="Borkova D."/>
            <person name="Bloecker H."/>
            <person name="Scharfe M."/>
            <person name="Grimm M."/>
            <person name="Loehnert T.-H."/>
            <person name="Dose S."/>
            <person name="de Haan M."/>
            <person name="Maarse A.C."/>
            <person name="Schaefer M."/>
            <person name="Mueller-Auer S."/>
            <person name="Gabel C."/>
            <person name="Fuchs M."/>
            <person name="Fartmann B."/>
            <person name="Granderath K."/>
            <person name="Dauner D."/>
            <person name="Herzl A."/>
            <person name="Neumann S."/>
            <person name="Argiriou A."/>
            <person name="Vitale D."/>
            <person name="Liguori R."/>
            <person name="Piravandi E."/>
            <person name="Massenet O."/>
            <person name="Quigley F."/>
            <person name="Clabauld G."/>
            <person name="Muendlein A."/>
            <person name="Felber R."/>
            <person name="Schnabl S."/>
            <person name="Hiller R."/>
            <person name="Schmidt W."/>
            <person name="Lecharny A."/>
            <person name="Aubourg S."/>
            <person name="Chefdor F."/>
            <person name="Cooke R."/>
            <person name="Berger C."/>
            <person name="Monfort A."/>
            <person name="Casacuberta E."/>
            <person name="Gibbons T."/>
            <person name="Weber N."/>
            <person name="Vandenbol M."/>
            <person name="Bargues M."/>
            <person name="Terol J."/>
            <person name="Torres A."/>
            <person name="Perez-Perez A."/>
            <person name="Purnelle B."/>
            <person name="Bent E."/>
            <person name="Johnson S."/>
            <person name="Tacon D."/>
            <person name="Jesse T."/>
            <person name="Heijnen L."/>
            <person name="Schwarz S."/>
            <person name="Scholler P."/>
            <person name="Heber S."/>
            <person name="Francs P."/>
            <person name="Bielke C."/>
            <person name="Frishman D."/>
            <person name="Haase D."/>
            <person name="Lemcke K."/>
            <person name="Mewes H.-W."/>
            <person name="Stocker S."/>
            <person name="Zaccaria P."/>
            <person name="Bevan M."/>
            <person name="Wilson R.K."/>
            <person name="de la Bastide M."/>
            <person name="Habermann K."/>
            <person name="Parnell L."/>
            <person name="Dedhia N."/>
            <person name="Gnoj L."/>
            <person name="Schutz K."/>
            <person name="Huang E."/>
            <person name="Spiegel L."/>
            <person name="Sekhon M."/>
            <person name="Murray J."/>
            <person name="Sheet P."/>
            <person name="Cordes M."/>
            <person name="Abu-Threideh J."/>
            <person name="Stoneking T."/>
            <person name="Kalicki J."/>
            <person name="Graves T."/>
            <person name="Harmon G."/>
            <person name="Edwards J."/>
            <person name="Latreille P."/>
            <person name="Courtney L."/>
            <person name="Cloud J."/>
            <person name="Abbott A."/>
            <person name="Scott K."/>
            <person name="Johnson D."/>
            <person name="Minx P."/>
            <person name="Bentley D."/>
            <person name="Fulton B."/>
            <person name="Miller N."/>
            <person name="Greco T."/>
            <person name="Kemp K."/>
            <person name="Kramer J."/>
            <person name="Fulton L."/>
            <person name="Mardis E."/>
            <person name="Dante M."/>
            <person name="Pepin K."/>
            <person name="Hillier L.W."/>
            <person name="Nelson J."/>
            <person name="Spieth J."/>
            <person name="Ryan E."/>
            <person name="Andrews S."/>
            <person name="Geisel C."/>
            <person name="Layman D."/>
            <person name="Du H."/>
            <person name="Ali J."/>
            <person name="Berghoff A."/>
            <person name="Jones K."/>
            <person name="Drone K."/>
            <person name="Cotton M."/>
            <person name="Joshu C."/>
            <person name="Antonoiu B."/>
            <person name="Zidanic M."/>
            <person name="Strong C."/>
            <person name="Sun H."/>
            <person name="Lamar B."/>
            <person name="Yordan C."/>
            <person name="Ma P."/>
            <person name="Zhong J."/>
            <person name="Preston R."/>
            <person name="Vil D."/>
            <person name="Shekher M."/>
            <person name="Matero A."/>
            <person name="Shah R."/>
            <person name="Swaby I.K."/>
            <person name="O'Shaughnessy A."/>
            <person name="Rodriguez M."/>
            <person name="Hoffman J."/>
            <person name="Till S."/>
            <person name="Granat S."/>
            <person name="Shohdy N."/>
            <person name="Hasegawa A."/>
            <person name="Hameed A."/>
            <person name="Lodhi M."/>
            <person name="Johnson A."/>
            <person name="Chen E."/>
            <person name="Marra M.A."/>
            <person name="Martienssen R."/>
            <person name="McCombie W.R."/>
        </authorList>
    </citation>
    <scope>NUCLEOTIDE SEQUENCE [LARGE SCALE GENOMIC DNA]</scope>
    <source>
        <strain>cv. Columbia</strain>
    </source>
</reference>
<reference key="2">
    <citation type="journal article" date="2017" name="Plant J.">
        <title>Araport11: a complete reannotation of the Arabidopsis thaliana reference genome.</title>
        <authorList>
            <person name="Cheng C.Y."/>
            <person name="Krishnakumar V."/>
            <person name="Chan A.P."/>
            <person name="Thibaud-Nissen F."/>
            <person name="Schobel S."/>
            <person name="Town C.D."/>
        </authorList>
    </citation>
    <scope>GENOME REANNOTATION</scope>
    <source>
        <strain>cv. Columbia</strain>
    </source>
</reference>
<reference key="3">
    <citation type="journal article" date="2003" name="Science">
        <title>Empirical analysis of transcriptional activity in the Arabidopsis genome.</title>
        <authorList>
            <person name="Yamada K."/>
            <person name="Lim J."/>
            <person name="Dale J.M."/>
            <person name="Chen H."/>
            <person name="Shinn P."/>
            <person name="Palm C.J."/>
            <person name="Southwick A.M."/>
            <person name="Wu H.C."/>
            <person name="Kim C.J."/>
            <person name="Nguyen M."/>
            <person name="Pham P.K."/>
            <person name="Cheuk R.F."/>
            <person name="Karlin-Newmann G."/>
            <person name="Liu S.X."/>
            <person name="Lam B."/>
            <person name="Sakano H."/>
            <person name="Wu T."/>
            <person name="Yu G."/>
            <person name="Miranda M."/>
            <person name="Quach H.L."/>
            <person name="Tripp M."/>
            <person name="Chang C.H."/>
            <person name="Lee J.M."/>
            <person name="Toriumi M.J."/>
            <person name="Chan M.M."/>
            <person name="Tang C.C."/>
            <person name="Onodera C.S."/>
            <person name="Deng J.M."/>
            <person name="Akiyama K."/>
            <person name="Ansari Y."/>
            <person name="Arakawa T."/>
            <person name="Banh J."/>
            <person name="Banno F."/>
            <person name="Bowser L."/>
            <person name="Brooks S.Y."/>
            <person name="Carninci P."/>
            <person name="Chao Q."/>
            <person name="Choy N."/>
            <person name="Enju A."/>
            <person name="Goldsmith A.D."/>
            <person name="Gurjal M."/>
            <person name="Hansen N.F."/>
            <person name="Hayashizaki Y."/>
            <person name="Johnson-Hopson C."/>
            <person name="Hsuan V.W."/>
            <person name="Iida K."/>
            <person name="Karnes M."/>
            <person name="Khan S."/>
            <person name="Koesema E."/>
            <person name="Ishida J."/>
            <person name="Jiang P.X."/>
            <person name="Jones T."/>
            <person name="Kawai J."/>
            <person name="Kamiya A."/>
            <person name="Meyers C."/>
            <person name="Nakajima M."/>
            <person name="Narusaka M."/>
            <person name="Seki M."/>
            <person name="Sakurai T."/>
            <person name="Satou M."/>
            <person name="Tamse R."/>
            <person name="Vaysberg M."/>
            <person name="Wallender E.K."/>
            <person name="Wong C."/>
            <person name="Yamamura Y."/>
            <person name="Yuan S."/>
            <person name="Shinozaki K."/>
            <person name="Davis R.W."/>
            <person name="Theologis A."/>
            <person name="Ecker J.R."/>
        </authorList>
    </citation>
    <scope>NUCLEOTIDE SEQUENCE [LARGE SCALE MRNA]</scope>
    <source>
        <strain>cv. Columbia</strain>
    </source>
</reference>
<reference key="4">
    <citation type="submission" date="2005-03" db="EMBL/GenBank/DDBJ databases">
        <title>Arabidopsis ORF clones.</title>
        <authorList>
            <person name="Kim C.J."/>
            <person name="Chen H."/>
            <person name="Cheuk R.F."/>
            <person name="Shinn P."/>
            <person name="Ecker J.R."/>
        </authorList>
    </citation>
    <scope>NUCLEOTIDE SEQUENCE [LARGE SCALE MRNA]</scope>
    <source>
        <strain>cv. Columbia</strain>
    </source>
</reference>
<reference key="5">
    <citation type="submission" date="2002-03" db="EMBL/GenBank/DDBJ databases">
        <title>Full-length cDNA from Arabidopsis thaliana.</title>
        <authorList>
            <person name="Brover V.V."/>
            <person name="Troukhan M.E."/>
            <person name="Alexandrov N.A."/>
            <person name="Lu Y.-P."/>
            <person name="Flavell R.B."/>
            <person name="Feldmann K.A."/>
        </authorList>
    </citation>
    <scope>NUCLEOTIDE SEQUENCE [LARGE SCALE MRNA]</scope>
</reference>
<reference key="6">
    <citation type="journal article" date="2006" name="EMBO J.">
        <title>AtSufE is an essential activator of plastidic and mitochondrial desulfurases in Arabidopsis.</title>
        <authorList>
            <person name="Xu X.M."/>
            <person name="Moeller S.G."/>
        </authorList>
    </citation>
    <scope>FUNCTION</scope>
    <scope>INTERACTION WITH NFS2 AND NIFS1</scope>
    <scope>SUBCELLULAR LOCATION</scope>
    <scope>DISRUPTION PHENOTYPE</scope>
</reference>
<reference key="7">
    <citation type="journal article" date="2006" name="J. Biol. Chem.">
        <title>CpSufE activates the cysteine desulfurase CpNifS for chloroplastic Fe-S cluster formation.</title>
        <authorList>
            <person name="Ye H."/>
            <person name="Abdel-Ghany S.E."/>
            <person name="Anderson T.D."/>
            <person name="Pilon-Smits E.A."/>
            <person name="Pilon M."/>
        </authorList>
    </citation>
    <scope>FUNCTION</scope>
    <scope>INTERACTION WITH NFS2</scope>
    <scope>SUBUNIT</scope>
    <scope>SUBCELLULAR LOCATION</scope>
    <scope>TISSUE SPECIFICITY</scope>
    <scope>MUTAGENESIS OF CYS-131</scope>
</reference>
<reference key="8">
    <citation type="journal article" date="2007" name="J. Biol. Chem.">
        <title>Characterization of Arabidopsis thaliana SufE2 and SufE3: functions in chloroplast iron-sulfur cluster assembly and Nad synthesis.</title>
        <authorList>
            <person name="Narayana Murthy U.M."/>
            <person name="Ollagnier-de-Choudens S."/>
            <person name="Sanakis Y."/>
            <person name="Abdel-Ghany S.E."/>
            <person name="Rousset C."/>
            <person name="Ye H."/>
            <person name="Fontecave M."/>
            <person name="Pilon-Smits E.A."/>
            <person name="Pilon M."/>
        </authorList>
    </citation>
    <scope>GENE FAMILY</scope>
</reference>
<reference key="9">
    <citation type="journal article" date="2014" name="Mol. Plant">
        <title>Monothiol glutaredoxin-BolA interactions: redox control of Arabidopsis thaliana BolA2 and SufE1.</title>
        <authorList>
            <person name="Couturier J."/>
            <person name="Wu H.C."/>
            <person name="Dhalleine T."/>
            <person name="Pegeot H."/>
            <person name="Sudre D."/>
            <person name="Gualberto J.M."/>
            <person name="Jacquot J.P."/>
            <person name="Gaymard F."/>
            <person name="Vignols F."/>
            <person name="Rouhier N."/>
        </authorList>
    </citation>
    <scope>FUNCTION</scope>
    <scope>INTERACTION WITH GRXC5; GRXS14; GRXS15; GRXS16 AND GRXS17</scope>
    <scope>GLUTATHIONYLATION AT CYS-131</scope>
</reference>
<reference key="10">
    <citation type="journal article" date="2014" name="J. Biol. Chem.">
        <title>Structural and spectroscopic insights into BolA-glutaredoxin complexes.</title>
        <authorList>
            <person name="Roret T."/>
            <person name="Tsan P."/>
            <person name="Couturier J."/>
            <person name="Zhang B."/>
            <person name="Johnson M.K."/>
            <person name="Rouhier N."/>
            <person name="Didierjean C."/>
        </authorList>
    </citation>
    <scope>X-RAY CRYSTALLOGRAPHY (1.70 ANGSTROMS) OF 277-371</scope>
</reference>
<gene>
    <name evidence="8" type="primary">SUFE1</name>
    <name type="synonym">EMB1374</name>
    <name evidence="6 7" type="synonym">SUFE</name>
    <name type="ordered locus">At4g26500</name>
    <name type="ORF">M3E9.70</name>
</gene>
<comment type="function">
    <text evidence="3 4 5">Participates in cysteine desulfurization mediated by NFS2 in chloroplast and NIFS1 in mitochondrion (PubMed:16437155). Activates the cysteine desulfurase activity of NFS2 (PubMed:16455656). Cysteine desulfurization mobilizes sulfur from L-cysteine to yield L-alanine and supplies the inorganic sulfur for iron-sulfur (Fe-S) cluster formation. Glutaredoxins regulate SUFE1 activity by inducing its reduction and deglutathionylation (PubMed:24203231).</text>
</comment>
<comment type="pathway">
    <text>Cofactor biosynthesis; iron-sulfur cluster biosynthesis.</text>
</comment>
<comment type="subunit">
    <text evidence="3 4 5">Heterotetramer with NFS2 (PubMed:16455656). Interacts with NFS2 and NIFS1 (PubMed:16437155). Interacts in vitro with GRXS14, GRXS15, GRXS16 and GRXS17, but not with GRXC5 (PubMed:24203231). Interacts in vivo only with GRXS14 and GRXS16 (PubMed:24203231).</text>
</comment>
<comment type="subcellular location">
    <subcellularLocation>
        <location evidence="3 4">Plastid</location>
        <location evidence="3 4">Chloroplast stroma</location>
    </subcellularLocation>
    <subcellularLocation>
        <location evidence="3">Mitochondrion</location>
    </subcellularLocation>
</comment>
<comment type="tissue specificity">
    <text evidence="4">Expressed in roots, leaves, stems and flowers.</text>
</comment>
<comment type="PTM">
    <text evidence="5">Glutathionylated. Glutathionylation strongly reduces the stimulation of NFS2 activity.</text>
</comment>
<comment type="disruption phenotype">
    <text evidence="3">Embryonic lethality when homozygous.</text>
</comment>
<comment type="miscellaneous">
    <text evidence="10">Over-expression of SUFE1 leads to retarded growth and chlorosis.</text>
</comment>
<comment type="similarity">
    <text evidence="9">Belongs to the SufE family.</text>
</comment>
<organism>
    <name type="scientific">Arabidopsis thaliana</name>
    <name type="common">Mouse-ear cress</name>
    <dbReference type="NCBI Taxonomy" id="3702"/>
    <lineage>
        <taxon>Eukaryota</taxon>
        <taxon>Viridiplantae</taxon>
        <taxon>Streptophyta</taxon>
        <taxon>Embryophyta</taxon>
        <taxon>Tracheophyta</taxon>
        <taxon>Spermatophyta</taxon>
        <taxon>Magnoliopsida</taxon>
        <taxon>eudicotyledons</taxon>
        <taxon>Gunneridae</taxon>
        <taxon>Pentapetalae</taxon>
        <taxon>rosids</taxon>
        <taxon>malvids</taxon>
        <taxon>Brassicales</taxon>
        <taxon>Brassicaceae</taxon>
        <taxon>Camelineae</taxon>
        <taxon>Arabidopsis</taxon>
    </lineage>
</organism>
<evidence type="ECO:0000250" key="1"/>
<evidence type="ECO:0000256" key="2">
    <source>
        <dbReference type="SAM" id="MobiDB-lite"/>
    </source>
</evidence>
<evidence type="ECO:0000269" key="3">
    <source>
    </source>
</evidence>
<evidence type="ECO:0000269" key="4">
    <source>
    </source>
</evidence>
<evidence type="ECO:0000269" key="5">
    <source>
    </source>
</evidence>
<evidence type="ECO:0000303" key="6">
    <source>
    </source>
</evidence>
<evidence type="ECO:0000303" key="7">
    <source>
    </source>
</evidence>
<evidence type="ECO:0000303" key="8">
    <source>
    </source>
</evidence>
<evidence type="ECO:0000305" key="9"/>
<evidence type="ECO:0000305" key="10">
    <source>
    </source>
</evidence>
<evidence type="ECO:0000305" key="11">
    <source>
    </source>
</evidence>
<evidence type="ECO:0007829" key="12">
    <source>
        <dbReference type="PDB" id="4PUI"/>
    </source>
</evidence>
<name>SUFE1_ARATH</name>
<protein>
    <recommendedName>
        <fullName evidence="8">SufE-like protein 1, chloroplastic/mitochondrial</fullName>
    </recommendedName>
    <alternativeName>
        <fullName evidence="7">Chloroplastic SufE</fullName>
        <shortName evidence="7">CpSufE</shortName>
    </alternativeName>
    <alternativeName>
        <fullName>Protein EMBRYO DEFECTIVE 1374</fullName>
    </alternativeName>
    <alternativeName>
        <fullName evidence="6">Protein SULFUR E</fullName>
        <shortName evidence="6">AtSUFE</shortName>
    </alternativeName>
    <alternativeName>
        <fullName evidence="8">Protein SULFUR E 1</fullName>
        <shortName evidence="8">AtSUFE1</shortName>
    </alternativeName>
</protein>
<feature type="transit peptide" description="Chloroplast and mitochondrion" evidence="9">
    <location>
        <begin position="1"/>
        <end position="66"/>
    </location>
</feature>
<feature type="chain" id="PRO_0000250653" description="SufE-like protein 1, chloroplastic/mitochondrial">
    <location>
        <begin position="67"/>
        <end position="371"/>
    </location>
</feature>
<feature type="region of interest" description="Disordered" evidence="2">
    <location>
        <begin position="218"/>
        <end position="249"/>
    </location>
</feature>
<feature type="active site" description="Cysteine persulfide intermediate" evidence="1">
    <location>
        <position position="131"/>
    </location>
</feature>
<feature type="modified residue" description="S-glutathionyl cysteine" evidence="11">
    <location>
        <position position="131"/>
    </location>
</feature>
<feature type="mutagenesis site" description="Loss of function." evidence="4">
    <original>C</original>
    <variation>S</variation>
    <location>
        <position position="131"/>
    </location>
</feature>
<feature type="sequence conflict" description="In Ref. 3; AAO42209." evidence="9" ref="3">
    <original>G</original>
    <variation>R</variation>
    <location>
        <position position="160"/>
    </location>
</feature>
<feature type="helix" evidence="12">
    <location>
        <begin position="280"/>
        <end position="293"/>
    </location>
</feature>
<feature type="strand" evidence="12">
    <location>
        <begin position="296"/>
        <end position="302"/>
    </location>
</feature>
<feature type="helix" evidence="12">
    <location>
        <begin position="304"/>
        <end position="306"/>
    </location>
</feature>
<feature type="strand" evidence="12">
    <location>
        <begin position="324"/>
        <end position="330"/>
    </location>
</feature>
<feature type="helix" evidence="12">
    <location>
        <begin position="332"/>
        <end position="334"/>
    </location>
</feature>
<feature type="helix" evidence="12">
    <location>
        <begin position="339"/>
        <end position="349"/>
    </location>
</feature>
<feature type="helix" evidence="12">
    <location>
        <begin position="351"/>
        <end position="354"/>
    </location>
</feature>
<feature type="turn" evidence="12">
    <location>
        <begin position="355"/>
        <end position="357"/>
    </location>
</feature>
<feature type="strand" evidence="12">
    <location>
        <begin position="360"/>
        <end position="366"/>
    </location>
</feature>
<feature type="helix" evidence="12">
    <location>
        <begin position="368"/>
        <end position="370"/>
    </location>
</feature>
<dbReference type="EMBL" id="AL022223">
    <property type="protein sequence ID" value="CAA18220.1"/>
    <property type="molecule type" value="Genomic_DNA"/>
</dbReference>
<dbReference type="EMBL" id="AL161565">
    <property type="protein sequence ID" value="CAB79505.1"/>
    <property type="molecule type" value="Genomic_DNA"/>
</dbReference>
<dbReference type="EMBL" id="CP002687">
    <property type="protein sequence ID" value="AEE85210.1"/>
    <property type="molecule type" value="Genomic_DNA"/>
</dbReference>
<dbReference type="EMBL" id="BT004190">
    <property type="protein sequence ID" value="AAO42209.1"/>
    <property type="molecule type" value="mRNA"/>
</dbReference>
<dbReference type="EMBL" id="BT021125">
    <property type="protein sequence ID" value="AAX22260.1"/>
    <property type="molecule type" value="mRNA"/>
</dbReference>
<dbReference type="EMBL" id="AY084591">
    <property type="protein sequence ID" value="AAM61156.1"/>
    <property type="molecule type" value="mRNA"/>
</dbReference>
<dbReference type="PIR" id="T05054">
    <property type="entry name" value="T05054"/>
</dbReference>
<dbReference type="PDB" id="4PUI">
    <property type="method" value="X-ray"/>
    <property type="resolution" value="1.70 A"/>
    <property type="chains" value="A/B=277-371"/>
</dbReference>
<dbReference type="PDBsum" id="4PUI"/>
<dbReference type="SMR" id="Q84W65"/>
<dbReference type="BioGRID" id="14043">
    <property type="interactions" value="9"/>
</dbReference>
<dbReference type="FunCoup" id="Q84W65">
    <property type="interactions" value="466"/>
</dbReference>
<dbReference type="STRING" id="3702.Q84W65"/>
<dbReference type="iPTMnet" id="Q84W65"/>
<dbReference type="SwissPalm" id="Q84W65"/>
<dbReference type="PaxDb" id="3702-AT4G26500.1"/>
<dbReference type="ProteomicsDB" id="228280"/>
<dbReference type="EnsemblPlants" id="AT4G26500.1">
    <property type="protein sequence ID" value="AT4G26500.1"/>
    <property type="gene ID" value="AT4G26500"/>
</dbReference>
<dbReference type="GeneID" id="828756"/>
<dbReference type="Gramene" id="AT4G26500.1">
    <property type="protein sequence ID" value="AT4G26500.1"/>
    <property type="gene ID" value="AT4G26500"/>
</dbReference>
<dbReference type="KEGG" id="ath:AT4G26500"/>
<dbReference type="Araport" id="AT4G26500"/>
<dbReference type="TAIR" id="AT4G26500">
    <property type="gene designation" value="CPSUFE"/>
</dbReference>
<dbReference type="eggNOG" id="KOG2313">
    <property type="taxonomic scope" value="Eukaryota"/>
</dbReference>
<dbReference type="HOGENOM" id="CLU_041968_0_0_1"/>
<dbReference type="InParanoid" id="Q84W65"/>
<dbReference type="OMA" id="DSQFKTR"/>
<dbReference type="OrthoDB" id="411584at2759"/>
<dbReference type="PhylomeDB" id="Q84W65"/>
<dbReference type="UniPathway" id="UPA00266"/>
<dbReference type="EvolutionaryTrace" id="Q84W65"/>
<dbReference type="PRO" id="PR:Q84W65"/>
<dbReference type="Proteomes" id="UP000006548">
    <property type="component" value="Chromosome 4"/>
</dbReference>
<dbReference type="ExpressionAtlas" id="Q84W65">
    <property type="expression patterns" value="baseline and differential"/>
</dbReference>
<dbReference type="GO" id="GO:0009507">
    <property type="term" value="C:chloroplast"/>
    <property type="evidence" value="ECO:0000314"/>
    <property type="project" value="TAIR"/>
</dbReference>
<dbReference type="GO" id="GO:0009570">
    <property type="term" value="C:chloroplast stroma"/>
    <property type="evidence" value="ECO:0000314"/>
    <property type="project" value="TAIR"/>
</dbReference>
<dbReference type="GO" id="GO:0005829">
    <property type="term" value="C:cytosol"/>
    <property type="evidence" value="ECO:0007005"/>
    <property type="project" value="TAIR"/>
</dbReference>
<dbReference type="GO" id="GO:0005739">
    <property type="term" value="C:mitochondrion"/>
    <property type="evidence" value="ECO:0000314"/>
    <property type="project" value="TAIR"/>
</dbReference>
<dbReference type="GO" id="GO:0008047">
    <property type="term" value="F:enzyme activator activity"/>
    <property type="evidence" value="ECO:0000314"/>
    <property type="project" value="TAIR"/>
</dbReference>
<dbReference type="GO" id="GO:0009793">
    <property type="term" value="P:embryo development ending in seed dormancy"/>
    <property type="evidence" value="ECO:0000315"/>
    <property type="project" value="TAIR"/>
</dbReference>
<dbReference type="FunFam" id="3.30.300.90:FF:000004">
    <property type="entry name" value="SufE-like protein, chloroplastic"/>
    <property type="match status" value="1"/>
</dbReference>
<dbReference type="Gene3D" id="3.90.1010.10">
    <property type="match status" value="1"/>
</dbReference>
<dbReference type="Gene3D" id="3.30.300.90">
    <property type="entry name" value="BolA-like"/>
    <property type="match status" value="1"/>
</dbReference>
<dbReference type="InterPro" id="IPR002634">
    <property type="entry name" value="BolA"/>
</dbReference>
<dbReference type="InterPro" id="IPR036065">
    <property type="entry name" value="BolA-like_sf"/>
</dbReference>
<dbReference type="InterPro" id="IPR003808">
    <property type="entry name" value="Fe-S_metab-assoc_dom"/>
</dbReference>
<dbReference type="PANTHER" id="PTHR46230">
    <property type="match status" value="1"/>
</dbReference>
<dbReference type="PANTHER" id="PTHR46230:SF3">
    <property type="entry name" value="SUFE-LIKE PROTEIN 1, CHLOROPLASTIC_MITOCHONDRIAL"/>
    <property type="match status" value="1"/>
</dbReference>
<dbReference type="Pfam" id="PF01722">
    <property type="entry name" value="BolA"/>
    <property type="match status" value="1"/>
</dbReference>
<dbReference type="Pfam" id="PF02657">
    <property type="entry name" value="SufE"/>
    <property type="match status" value="1"/>
</dbReference>
<dbReference type="SUPFAM" id="SSF82657">
    <property type="entry name" value="BolA-like"/>
    <property type="match status" value="1"/>
</dbReference>
<dbReference type="SUPFAM" id="SSF82649">
    <property type="entry name" value="SufE/NifU"/>
    <property type="match status" value="1"/>
</dbReference>